<dbReference type="EC" id="5.4.2.7" evidence="1"/>
<dbReference type="EMBL" id="CP000901">
    <property type="protein sequence ID" value="ABX87383.1"/>
    <property type="molecule type" value="Genomic_DNA"/>
</dbReference>
<dbReference type="RefSeq" id="WP_012229129.1">
    <property type="nucleotide sequence ID" value="NC_010159.1"/>
</dbReference>
<dbReference type="SMR" id="A9R047"/>
<dbReference type="KEGG" id="ypg:YpAngola_A0829"/>
<dbReference type="PATRIC" id="fig|349746.12.peg.1781"/>
<dbReference type="UniPathway" id="UPA00002">
    <property type="reaction ID" value="UER00467"/>
</dbReference>
<dbReference type="GO" id="GO:0005829">
    <property type="term" value="C:cytosol"/>
    <property type="evidence" value="ECO:0007669"/>
    <property type="project" value="TreeGrafter"/>
</dbReference>
<dbReference type="GO" id="GO:0000287">
    <property type="term" value="F:magnesium ion binding"/>
    <property type="evidence" value="ECO:0007669"/>
    <property type="project" value="InterPro"/>
</dbReference>
<dbReference type="GO" id="GO:0030145">
    <property type="term" value="F:manganese ion binding"/>
    <property type="evidence" value="ECO:0007669"/>
    <property type="project" value="UniProtKB-UniRule"/>
</dbReference>
<dbReference type="GO" id="GO:0008973">
    <property type="term" value="F:phosphopentomutase activity"/>
    <property type="evidence" value="ECO:0007669"/>
    <property type="project" value="UniProtKB-UniRule"/>
</dbReference>
<dbReference type="GO" id="GO:0006018">
    <property type="term" value="P:2-deoxyribose 1-phosphate catabolic process"/>
    <property type="evidence" value="ECO:0007669"/>
    <property type="project" value="UniProtKB-UniRule"/>
</dbReference>
<dbReference type="GO" id="GO:0006015">
    <property type="term" value="P:5-phosphoribose 1-diphosphate biosynthetic process"/>
    <property type="evidence" value="ECO:0007669"/>
    <property type="project" value="UniProtKB-UniPathway"/>
</dbReference>
<dbReference type="GO" id="GO:0043094">
    <property type="term" value="P:metabolic compound salvage"/>
    <property type="evidence" value="ECO:0007669"/>
    <property type="project" value="InterPro"/>
</dbReference>
<dbReference type="GO" id="GO:0009117">
    <property type="term" value="P:nucleotide metabolic process"/>
    <property type="evidence" value="ECO:0007669"/>
    <property type="project" value="InterPro"/>
</dbReference>
<dbReference type="CDD" id="cd16009">
    <property type="entry name" value="PPM"/>
    <property type="match status" value="1"/>
</dbReference>
<dbReference type="FunFam" id="3.30.70.1250:FF:000001">
    <property type="entry name" value="Phosphopentomutase"/>
    <property type="match status" value="1"/>
</dbReference>
<dbReference type="Gene3D" id="3.40.720.10">
    <property type="entry name" value="Alkaline Phosphatase, subunit A"/>
    <property type="match status" value="1"/>
</dbReference>
<dbReference type="Gene3D" id="3.30.70.1250">
    <property type="entry name" value="Phosphopentomutase"/>
    <property type="match status" value="1"/>
</dbReference>
<dbReference type="HAMAP" id="MF_00740">
    <property type="entry name" value="Phosphopentomut"/>
    <property type="match status" value="1"/>
</dbReference>
<dbReference type="InterPro" id="IPR017850">
    <property type="entry name" value="Alkaline_phosphatase_core_sf"/>
</dbReference>
<dbReference type="InterPro" id="IPR010045">
    <property type="entry name" value="DeoB"/>
</dbReference>
<dbReference type="InterPro" id="IPR006124">
    <property type="entry name" value="Metalloenzyme"/>
</dbReference>
<dbReference type="InterPro" id="IPR024052">
    <property type="entry name" value="Phosphopentomutase_DeoB_cap_sf"/>
</dbReference>
<dbReference type="NCBIfam" id="TIGR01696">
    <property type="entry name" value="deoB"/>
    <property type="match status" value="1"/>
</dbReference>
<dbReference type="NCBIfam" id="NF003766">
    <property type="entry name" value="PRK05362.1"/>
    <property type="match status" value="1"/>
</dbReference>
<dbReference type="PANTHER" id="PTHR21110">
    <property type="entry name" value="PHOSPHOPENTOMUTASE"/>
    <property type="match status" value="1"/>
</dbReference>
<dbReference type="PANTHER" id="PTHR21110:SF0">
    <property type="entry name" value="PHOSPHOPENTOMUTASE"/>
    <property type="match status" value="1"/>
</dbReference>
<dbReference type="Pfam" id="PF01676">
    <property type="entry name" value="Metalloenzyme"/>
    <property type="match status" value="1"/>
</dbReference>
<dbReference type="PIRSF" id="PIRSF001491">
    <property type="entry name" value="Ppentomutase"/>
    <property type="match status" value="1"/>
</dbReference>
<dbReference type="SUPFAM" id="SSF53649">
    <property type="entry name" value="Alkaline phosphatase-like"/>
    <property type="match status" value="1"/>
</dbReference>
<dbReference type="SUPFAM" id="SSF143856">
    <property type="entry name" value="DeoB insert domain-like"/>
    <property type="match status" value="1"/>
</dbReference>
<protein>
    <recommendedName>
        <fullName evidence="1">Phosphopentomutase</fullName>
        <ecNumber evidence="1">5.4.2.7</ecNumber>
    </recommendedName>
    <alternativeName>
        <fullName evidence="1">Phosphodeoxyribomutase</fullName>
    </alternativeName>
</protein>
<evidence type="ECO:0000255" key="1">
    <source>
        <dbReference type="HAMAP-Rule" id="MF_00740"/>
    </source>
</evidence>
<gene>
    <name evidence="1" type="primary">deoB</name>
    <name type="ordered locus">YpAngola_A0829</name>
</gene>
<accession>A9R047</accession>
<proteinExistence type="inferred from homology"/>
<feature type="chain" id="PRO_1000189775" description="Phosphopentomutase">
    <location>
        <begin position="1"/>
        <end position="407"/>
    </location>
</feature>
<feature type="binding site" evidence="1">
    <location>
        <position position="10"/>
    </location>
    <ligand>
        <name>Mn(2+)</name>
        <dbReference type="ChEBI" id="CHEBI:29035"/>
        <label>1</label>
    </ligand>
</feature>
<feature type="binding site" evidence="1">
    <location>
        <position position="306"/>
    </location>
    <ligand>
        <name>Mn(2+)</name>
        <dbReference type="ChEBI" id="CHEBI:29035"/>
        <label>2</label>
    </ligand>
</feature>
<feature type="binding site" evidence="1">
    <location>
        <position position="311"/>
    </location>
    <ligand>
        <name>Mn(2+)</name>
        <dbReference type="ChEBI" id="CHEBI:29035"/>
        <label>2</label>
    </ligand>
</feature>
<feature type="binding site" evidence="1">
    <location>
        <position position="347"/>
    </location>
    <ligand>
        <name>Mn(2+)</name>
        <dbReference type="ChEBI" id="CHEBI:29035"/>
        <label>1</label>
    </ligand>
</feature>
<feature type="binding site" evidence="1">
    <location>
        <position position="348"/>
    </location>
    <ligand>
        <name>Mn(2+)</name>
        <dbReference type="ChEBI" id="CHEBI:29035"/>
        <label>1</label>
    </ligand>
</feature>
<feature type="binding site" evidence="1">
    <location>
        <position position="359"/>
    </location>
    <ligand>
        <name>Mn(2+)</name>
        <dbReference type="ChEBI" id="CHEBI:29035"/>
        <label>2</label>
    </ligand>
</feature>
<organism>
    <name type="scientific">Yersinia pestis bv. Antiqua (strain Angola)</name>
    <dbReference type="NCBI Taxonomy" id="349746"/>
    <lineage>
        <taxon>Bacteria</taxon>
        <taxon>Pseudomonadati</taxon>
        <taxon>Pseudomonadota</taxon>
        <taxon>Gammaproteobacteria</taxon>
        <taxon>Enterobacterales</taxon>
        <taxon>Yersiniaceae</taxon>
        <taxon>Yersinia</taxon>
    </lineage>
</organism>
<comment type="function">
    <text evidence="1">Isomerase that catalyzes the conversion of deoxy-ribose 1-phosphate (dRib-1-P) and ribose 1-phosphate (Rib-1-P) to deoxy-ribose 5-phosphate (dRib-5-P) and ribose 5-phosphate (Rib-5-P), respectively.</text>
</comment>
<comment type="catalytic activity">
    <reaction evidence="1">
        <text>2-deoxy-alpha-D-ribose 1-phosphate = 2-deoxy-D-ribose 5-phosphate</text>
        <dbReference type="Rhea" id="RHEA:27658"/>
        <dbReference type="ChEBI" id="CHEBI:57259"/>
        <dbReference type="ChEBI" id="CHEBI:62877"/>
        <dbReference type="EC" id="5.4.2.7"/>
    </reaction>
</comment>
<comment type="catalytic activity">
    <reaction evidence="1">
        <text>alpha-D-ribose 1-phosphate = D-ribose 5-phosphate</text>
        <dbReference type="Rhea" id="RHEA:18793"/>
        <dbReference type="ChEBI" id="CHEBI:57720"/>
        <dbReference type="ChEBI" id="CHEBI:78346"/>
        <dbReference type="EC" id="5.4.2.7"/>
    </reaction>
</comment>
<comment type="cofactor">
    <cofactor evidence="1">
        <name>Mn(2+)</name>
        <dbReference type="ChEBI" id="CHEBI:29035"/>
    </cofactor>
    <text evidence="1">Binds 2 manganese ions.</text>
</comment>
<comment type="pathway">
    <text evidence="1">Carbohydrate degradation; 2-deoxy-D-ribose 1-phosphate degradation; D-glyceraldehyde 3-phosphate and acetaldehyde from 2-deoxy-alpha-D-ribose 1-phosphate: step 1/2.</text>
</comment>
<comment type="subcellular location">
    <subcellularLocation>
        <location evidence="1">Cytoplasm</location>
    </subcellularLocation>
</comment>
<comment type="similarity">
    <text evidence="1">Belongs to the phosphopentomutase family.</text>
</comment>
<name>DEOB_YERPG</name>
<keyword id="KW-0963">Cytoplasm</keyword>
<keyword id="KW-0413">Isomerase</keyword>
<keyword id="KW-0464">Manganese</keyword>
<keyword id="KW-0479">Metal-binding</keyword>
<sequence length="407" mass="44096">MKRTFIMVLDSFGIGASADAKKFGDEGADTLGHIAEACARGEANVGRSGPLTLPNLSRLGLGKAAEESTGTFPVGLDKNADIIGAYGYASELSSGKDTPSGHWEIAGVPVLFDWGYFSDVENSFPQELLDKLVKRANLSGYLGNCHSSGTVILDQLGEEHMKTGKPIFYTSADSVFQIACHEETFGLDRLYELCEIAREELTDGGYNIGRVIARPFIGDKPGHFQRTGNRHDLAVEPPAPTMLKKLVDEKGGEVVSIGKIADIYAQVGITQKVKATGLDALFDATIEEMKKAGDNTIVFTNFVDFDSSYGHRRDVAGYAAALELFDRRLPELMALIKEDDILILTADHGCDPTWPGTDHTREHIPVLVYGPKVKPGSLGHRETFADIGQTVAAYFGLSPMDYGKNML</sequence>
<reference key="1">
    <citation type="journal article" date="2010" name="J. Bacteriol.">
        <title>Genome sequence of the deep-rooted Yersinia pestis strain Angola reveals new insights into the evolution and pangenome of the plague bacterium.</title>
        <authorList>
            <person name="Eppinger M."/>
            <person name="Worsham P.L."/>
            <person name="Nikolich M.P."/>
            <person name="Riley D.R."/>
            <person name="Sebastian Y."/>
            <person name="Mou S."/>
            <person name="Achtman M."/>
            <person name="Lindler L.E."/>
            <person name="Ravel J."/>
        </authorList>
    </citation>
    <scope>NUCLEOTIDE SEQUENCE [LARGE SCALE GENOMIC DNA]</scope>
    <source>
        <strain>Angola</strain>
    </source>
</reference>